<comment type="function">
    <text evidence="1">Catalyzes the reversible isomerization of glucose-6-phosphate to fructose-6-phosphate.</text>
</comment>
<comment type="catalytic activity">
    <reaction evidence="1">
        <text>alpha-D-glucose 6-phosphate = beta-D-fructose 6-phosphate</text>
        <dbReference type="Rhea" id="RHEA:11816"/>
        <dbReference type="ChEBI" id="CHEBI:57634"/>
        <dbReference type="ChEBI" id="CHEBI:58225"/>
        <dbReference type="EC" id="5.3.1.9"/>
    </reaction>
</comment>
<comment type="pathway">
    <text evidence="1">Carbohydrate biosynthesis; gluconeogenesis.</text>
</comment>
<comment type="pathway">
    <text evidence="1">Carbohydrate degradation; glycolysis; D-glyceraldehyde 3-phosphate and glycerone phosphate from D-glucose: step 2/4.</text>
</comment>
<comment type="subcellular location">
    <subcellularLocation>
        <location evidence="1">Cytoplasm</location>
    </subcellularLocation>
</comment>
<comment type="similarity">
    <text evidence="1">Belongs to the GPI family.</text>
</comment>
<feature type="chain" id="PRO_0000180595" description="Glucose-6-phosphate isomerase">
    <location>
        <begin position="1"/>
        <end position="445"/>
    </location>
</feature>
<feature type="active site" description="Proton donor" evidence="1">
    <location>
        <position position="287"/>
    </location>
</feature>
<feature type="active site" evidence="1">
    <location>
        <position position="308"/>
    </location>
</feature>
<feature type="active site" evidence="1">
    <location>
        <position position="422"/>
    </location>
</feature>
<protein>
    <recommendedName>
        <fullName evidence="1">Glucose-6-phosphate isomerase</fullName>
        <shortName evidence="1">GPI</shortName>
        <ecNumber evidence="1">5.3.1.9</ecNumber>
    </recommendedName>
    <alternativeName>
        <fullName evidence="1">Phosphoglucose isomerase</fullName>
        <shortName evidence="1">PGI</shortName>
    </alternativeName>
    <alternativeName>
        <fullName evidence="1">Phosphohexose isomerase</fullName>
        <shortName evidence="1">PHI</shortName>
    </alternativeName>
</protein>
<dbReference type="EC" id="5.3.1.9" evidence="1"/>
<dbReference type="EMBL" id="AP006841">
    <property type="protein sequence ID" value="BAD50554.1"/>
    <property type="molecule type" value="Genomic_DNA"/>
</dbReference>
<dbReference type="RefSeq" id="WP_005790898.1">
    <property type="nucleotide sequence ID" value="NZ_UYXF01000024.1"/>
</dbReference>
<dbReference type="RefSeq" id="YP_101088.1">
    <property type="nucleotide sequence ID" value="NC_006347.1"/>
</dbReference>
<dbReference type="SMR" id="Q64PM7"/>
<dbReference type="STRING" id="295405.BF3812"/>
<dbReference type="KEGG" id="bfr:BF3812"/>
<dbReference type="PATRIC" id="fig|295405.11.peg.3660"/>
<dbReference type="HOGENOM" id="CLU_037303_0_1_10"/>
<dbReference type="OrthoDB" id="140919at2"/>
<dbReference type="UniPathway" id="UPA00109">
    <property type="reaction ID" value="UER00181"/>
</dbReference>
<dbReference type="UniPathway" id="UPA00138"/>
<dbReference type="Proteomes" id="UP000002197">
    <property type="component" value="Chromosome"/>
</dbReference>
<dbReference type="GO" id="GO:0005829">
    <property type="term" value="C:cytosol"/>
    <property type="evidence" value="ECO:0007669"/>
    <property type="project" value="TreeGrafter"/>
</dbReference>
<dbReference type="GO" id="GO:0097367">
    <property type="term" value="F:carbohydrate derivative binding"/>
    <property type="evidence" value="ECO:0007669"/>
    <property type="project" value="InterPro"/>
</dbReference>
<dbReference type="GO" id="GO:0004347">
    <property type="term" value="F:glucose-6-phosphate isomerase activity"/>
    <property type="evidence" value="ECO:0007669"/>
    <property type="project" value="UniProtKB-UniRule"/>
</dbReference>
<dbReference type="GO" id="GO:0048029">
    <property type="term" value="F:monosaccharide binding"/>
    <property type="evidence" value="ECO:0007669"/>
    <property type="project" value="TreeGrafter"/>
</dbReference>
<dbReference type="GO" id="GO:0006094">
    <property type="term" value="P:gluconeogenesis"/>
    <property type="evidence" value="ECO:0007669"/>
    <property type="project" value="UniProtKB-UniRule"/>
</dbReference>
<dbReference type="GO" id="GO:0051156">
    <property type="term" value="P:glucose 6-phosphate metabolic process"/>
    <property type="evidence" value="ECO:0007669"/>
    <property type="project" value="TreeGrafter"/>
</dbReference>
<dbReference type="GO" id="GO:0006096">
    <property type="term" value="P:glycolytic process"/>
    <property type="evidence" value="ECO:0007669"/>
    <property type="project" value="UniProtKB-UniRule"/>
</dbReference>
<dbReference type="CDD" id="cd05015">
    <property type="entry name" value="SIS_PGI_1"/>
    <property type="match status" value="1"/>
</dbReference>
<dbReference type="CDD" id="cd05016">
    <property type="entry name" value="SIS_PGI_2"/>
    <property type="match status" value="1"/>
</dbReference>
<dbReference type="FunFam" id="3.40.50.10490:FF:000015">
    <property type="entry name" value="Glucose-6-phosphate isomerase"/>
    <property type="match status" value="1"/>
</dbReference>
<dbReference type="FunFam" id="3.40.50.10490:FF:000016">
    <property type="entry name" value="Glucose-6-phosphate isomerase"/>
    <property type="match status" value="1"/>
</dbReference>
<dbReference type="Gene3D" id="3.40.50.10490">
    <property type="entry name" value="Glucose-6-phosphate isomerase like protein, domain 1"/>
    <property type="match status" value="2"/>
</dbReference>
<dbReference type="HAMAP" id="MF_00473">
    <property type="entry name" value="G6P_isomerase"/>
    <property type="match status" value="1"/>
</dbReference>
<dbReference type="InterPro" id="IPR001672">
    <property type="entry name" value="G6P_Isomerase"/>
</dbReference>
<dbReference type="InterPro" id="IPR018189">
    <property type="entry name" value="Phosphoglucose_isomerase_CS"/>
</dbReference>
<dbReference type="InterPro" id="IPR046348">
    <property type="entry name" value="SIS_dom_sf"/>
</dbReference>
<dbReference type="InterPro" id="IPR035476">
    <property type="entry name" value="SIS_PGI_1"/>
</dbReference>
<dbReference type="InterPro" id="IPR035482">
    <property type="entry name" value="SIS_PGI_2"/>
</dbReference>
<dbReference type="NCBIfam" id="NF010697">
    <property type="entry name" value="PRK14097.1"/>
    <property type="match status" value="1"/>
</dbReference>
<dbReference type="PANTHER" id="PTHR11469">
    <property type="entry name" value="GLUCOSE-6-PHOSPHATE ISOMERASE"/>
    <property type="match status" value="1"/>
</dbReference>
<dbReference type="PANTHER" id="PTHR11469:SF1">
    <property type="entry name" value="GLUCOSE-6-PHOSPHATE ISOMERASE"/>
    <property type="match status" value="1"/>
</dbReference>
<dbReference type="Pfam" id="PF00342">
    <property type="entry name" value="PGI"/>
    <property type="match status" value="1"/>
</dbReference>
<dbReference type="PRINTS" id="PR00662">
    <property type="entry name" value="G6PISOMERASE"/>
</dbReference>
<dbReference type="SUPFAM" id="SSF53697">
    <property type="entry name" value="SIS domain"/>
    <property type="match status" value="1"/>
</dbReference>
<dbReference type="PROSITE" id="PS00765">
    <property type="entry name" value="P_GLUCOSE_ISOMERASE_1"/>
    <property type="match status" value="1"/>
</dbReference>
<dbReference type="PROSITE" id="PS00174">
    <property type="entry name" value="P_GLUCOSE_ISOMERASE_2"/>
    <property type="match status" value="1"/>
</dbReference>
<dbReference type="PROSITE" id="PS51463">
    <property type="entry name" value="P_GLUCOSE_ISOMERASE_3"/>
    <property type="match status" value="1"/>
</dbReference>
<keyword id="KW-0963">Cytoplasm</keyword>
<keyword id="KW-0312">Gluconeogenesis</keyword>
<keyword id="KW-0324">Glycolysis</keyword>
<keyword id="KW-0413">Isomerase</keyword>
<evidence type="ECO:0000255" key="1">
    <source>
        <dbReference type="HAMAP-Rule" id="MF_00473"/>
    </source>
</evidence>
<gene>
    <name evidence="1" type="primary">pgi</name>
    <name type="ordered locus">BF3812</name>
</gene>
<sequence>MISLNIEKTFGFISKESVSAYEAQVKAAQEALENGTGKGNDFLGWLHLPSSISKEHLADLKATAQVLRDNCEVVIVAGIGGSYLGARAVIEALSNSFTWLQEKKTAPVMIYAGHNIGEDYLYELTEFLKDKKFGVINISKSGTTTETALAFRLLKKQCEDQRGKEMAKKVIVAVTDAKKGAARVTADKEGYKSFIIPDNVGGRFSVLTPVGLLPIAVAGFDIEQLVNGAADMEKACGADVPFAENPAAIYAATRNELYKNGKKIEILVNFCPKLHYVSEWWKQLYGESEGKDNKGIFPAAVDFSTDLHSMGQWIQEGERTIFETVISVDKVNHKLEVPSDEANLDGLNFLAGKRVDEVNKMAELGTQLAHVDGGVPNMRIVIPELSEFSIGQLLYFFEKACGISGYLLGVNPFNQPGVEAYKKNMFALLNKPGYEEESKAIQARL</sequence>
<organism>
    <name type="scientific">Bacteroides fragilis (strain YCH46)</name>
    <dbReference type="NCBI Taxonomy" id="295405"/>
    <lineage>
        <taxon>Bacteria</taxon>
        <taxon>Pseudomonadati</taxon>
        <taxon>Bacteroidota</taxon>
        <taxon>Bacteroidia</taxon>
        <taxon>Bacteroidales</taxon>
        <taxon>Bacteroidaceae</taxon>
        <taxon>Bacteroides</taxon>
    </lineage>
</organism>
<name>G6PI_BACFR</name>
<proteinExistence type="inferred from homology"/>
<accession>Q64PM7</accession>
<reference key="1">
    <citation type="journal article" date="2004" name="Proc. Natl. Acad. Sci. U.S.A.">
        <title>Genomic analysis of Bacteroides fragilis reveals extensive DNA inversions regulating cell surface adaptation.</title>
        <authorList>
            <person name="Kuwahara T."/>
            <person name="Yamashita A."/>
            <person name="Hirakawa H."/>
            <person name="Nakayama H."/>
            <person name="Toh H."/>
            <person name="Okada N."/>
            <person name="Kuhara S."/>
            <person name="Hattori M."/>
            <person name="Hayashi T."/>
            <person name="Ohnishi Y."/>
        </authorList>
    </citation>
    <scope>NUCLEOTIDE SEQUENCE [LARGE SCALE GENOMIC DNA]</scope>
    <source>
        <strain>YCH46</strain>
    </source>
</reference>